<dbReference type="EC" id="3.6.1.-" evidence="1"/>
<dbReference type="EMBL" id="CU928161">
    <property type="protein sequence ID" value="CAR05374.1"/>
    <property type="molecule type" value="Genomic_DNA"/>
</dbReference>
<dbReference type="RefSeq" id="WP_001296585.1">
    <property type="nucleotide sequence ID" value="NC_011742.1"/>
</dbReference>
<dbReference type="SMR" id="B7MGG6"/>
<dbReference type="KEGG" id="ecz:ECS88_4168"/>
<dbReference type="HOGENOM" id="CLU_018678_1_0_6"/>
<dbReference type="Proteomes" id="UP000000747">
    <property type="component" value="Chromosome"/>
</dbReference>
<dbReference type="GO" id="GO:0005737">
    <property type="term" value="C:cytoplasm"/>
    <property type="evidence" value="ECO:0007669"/>
    <property type="project" value="UniProtKB-SubCell"/>
</dbReference>
<dbReference type="GO" id="GO:0005524">
    <property type="term" value="F:ATP binding"/>
    <property type="evidence" value="ECO:0007669"/>
    <property type="project" value="UniProtKB-KW"/>
</dbReference>
<dbReference type="GO" id="GO:0016887">
    <property type="term" value="F:ATP hydrolysis activity"/>
    <property type="evidence" value="ECO:0007669"/>
    <property type="project" value="UniProtKB-UniRule"/>
</dbReference>
<dbReference type="CDD" id="cd00009">
    <property type="entry name" value="AAA"/>
    <property type="match status" value="1"/>
</dbReference>
<dbReference type="FunFam" id="3.40.50.300:FF:000410">
    <property type="entry name" value="ATPase RavA"/>
    <property type="match status" value="1"/>
</dbReference>
<dbReference type="Gene3D" id="1.20.58.1510">
    <property type="match status" value="1"/>
</dbReference>
<dbReference type="Gene3D" id="2.40.128.430">
    <property type="match status" value="1"/>
</dbReference>
<dbReference type="Gene3D" id="3.40.50.300">
    <property type="entry name" value="P-loop containing nucleotide triphosphate hydrolases"/>
    <property type="match status" value="1"/>
</dbReference>
<dbReference type="HAMAP" id="MF_01625">
    <property type="entry name" value="ATPase_RavA"/>
    <property type="match status" value="1"/>
</dbReference>
<dbReference type="InterPro" id="IPR003593">
    <property type="entry name" value="AAA+_ATPase"/>
</dbReference>
<dbReference type="InterPro" id="IPR023671">
    <property type="entry name" value="ATPase_RavA"/>
</dbReference>
<dbReference type="InterPro" id="IPR022547">
    <property type="entry name" value="ATPase_RavA_C"/>
</dbReference>
<dbReference type="InterPro" id="IPR045427">
    <property type="entry name" value="MoxR"/>
</dbReference>
<dbReference type="InterPro" id="IPR027417">
    <property type="entry name" value="P-loop_NTPase"/>
</dbReference>
<dbReference type="InterPro" id="IPR041538">
    <property type="entry name" value="RavA-like_AAA_lid"/>
</dbReference>
<dbReference type="InterPro" id="IPR050513">
    <property type="entry name" value="RavA_ATPases"/>
</dbReference>
<dbReference type="InterPro" id="IPR046898">
    <property type="entry name" value="RavA_LARA_dom"/>
</dbReference>
<dbReference type="InterPro" id="IPR046932">
    <property type="entry name" value="RavA_LARA_sf"/>
</dbReference>
<dbReference type="NCBIfam" id="NF010054">
    <property type="entry name" value="PRK13531.1"/>
    <property type="match status" value="1"/>
</dbReference>
<dbReference type="PANTHER" id="PTHR32204">
    <property type="entry name" value="ATPASE RAVA"/>
    <property type="match status" value="1"/>
</dbReference>
<dbReference type="PANTHER" id="PTHR32204:SF0">
    <property type="entry name" value="ATPASE RAVA"/>
    <property type="match status" value="1"/>
</dbReference>
<dbReference type="Pfam" id="PF17868">
    <property type="entry name" value="AAA_lid_8"/>
    <property type="match status" value="1"/>
</dbReference>
<dbReference type="Pfam" id="PF12592">
    <property type="entry name" value="ATPase_RavA_C"/>
    <property type="match status" value="1"/>
</dbReference>
<dbReference type="Pfam" id="PF20030">
    <property type="entry name" value="bpMoxR"/>
    <property type="match status" value="1"/>
</dbReference>
<dbReference type="Pfam" id="PF20265">
    <property type="entry name" value="LARA_dom"/>
    <property type="match status" value="1"/>
</dbReference>
<dbReference type="SMART" id="SM00382">
    <property type="entry name" value="AAA"/>
    <property type="match status" value="1"/>
</dbReference>
<dbReference type="SUPFAM" id="SSF52540">
    <property type="entry name" value="P-loop containing nucleoside triphosphate hydrolases"/>
    <property type="match status" value="1"/>
</dbReference>
<evidence type="ECO:0000255" key="1">
    <source>
        <dbReference type="HAMAP-Rule" id="MF_01625"/>
    </source>
</evidence>
<proteinExistence type="inferred from homology"/>
<protein>
    <recommendedName>
        <fullName evidence="1">Regulatory ATPase RavA</fullName>
        <ecNumber evidence="1">3.6.1.-</ecNumber>
    </recommendedName>
    <alternativeName>
        <fullName evidence="1">Regulatory ATPase variant A</fullName>
    </alternativeName>
</protein>
<gene>
    <name evidence="1" type="primary">ravA</name>
    <name type="ordered locus">ECS88_4168</name>
</gene>
<organism>
    <name type="scientific">Escherichia coli O45:K1 (strain S88 / ExPEC)</name>
    <dbReference type="NCBI Taxonomy" id="585035"/>
    <lineage>
        <taxon>Bacteria</taxon>
        <taxon>Pseudomonadati</taxon>
        <taxon>Pseudomonadota</taxon>
        <taxon>Gammaproteobacteria</taxon>
        <taxon>Enterobacterales</taxon>
        <taxon>Enterobacteriaceae</taxon>
        <taxon>Escherichia</taxon>
    </lineage>
</organism>
<name>RAVA_ECO45</name>
<feature type="chain" id="PRO_1000186122" description="Regulatory ATPase RavA">
    <location>
        <begin position="1"/>
        <end position="498"/>
    </location>
</feature>
<feature type="binding site" evidence="1">
    <location>
        <position position="23"/>
    </location>
    <ligand>
        <name>ADP</name>
        <dbReference type="ChEBI" id="CHEBI:456216"/>
    </ligand>
</feature>
<feature type="binding site" evidence="1">
    <location>
        <position position="49"/>
    </location>
    <ligand>
        <name>ADP</name>
        <dbReference type="ChEBI" id="CHEBI:456216"/>
    </ligand>
</feature>
<feature type="binding site" evidence="1">
    <location>
        <position position="50"/>
    </location>
    <ligand>
        <name>ADP</name>
        <dbReference type="ChEBI" id="CHEBI:456216"/>
    </ligand>
</feature>
<feature type="binding site" evidence="1">
    <location>
        <position position="51"/>
    </location>
    <ligand>
        <name>ADP</name>
        <dbReference type="ChEBI" id="CHEBI:456216"/>
    </ligand>
</feature>
<feature type="binding site" evidence="1">
    <location>
        <position position="52"/>
    </location>
    <ligand>
        <name>ADP</name>
        <dbReference type="ChEBI" id="CHEBI:456216"/>
    </ligand>
</feature>
<feature type="binding site" evidence="1">
    <location>
        <position position="53"/>
    </location>
    <ligand>
        <name>ADP</name>
        <dbReference type="ChEBI" id="CHEBI:456216"/>
    </ligand>
</feature>
<feature type="binding site" evidence="1">
    <location>
        <position position="54"/>
    </location>
    <ligand>
        <name>ADP</name>
        <dbReference type="ChEBI" id="CHEBI:456216"/>
    </ligand>
</feature>
<feature type="binding site" evidence="1">
    <location>
        <position position="196"/>
    </location>
    <ligand>
        <name>ADP</name>
        <dbReference type="ChEBI" id="CHEBI:456216"/>
    </ligand>
</feature>
<comment type="function">
    <text evidence="1">Component of the RavA-ViaA chaperone complex, which may act on the membrane to optimize the function of some of the respiratory chains. RavA functions as an ATPase.</text>
</comment>
<comment type="catalytic activity">
    <reaction evidence="1">
        <text>ATP + H2O = ADP + phosphate + H(+)</text>
        <dbReference type="Rhea" id="RHEA:13065"/>
        <dbReference type="ChEBI" id="CHEBI:15377"/>
        <dbReference type="ChEBI" id="CHEBI:15378"/>
        <dbReference type="ChEBI" id="CHEBI:30616"/>
        <dbReference type="ChEBI" id="CHEBI:43474"/>
        <dbReference type="ChEBI" id="CHEBI:456216"/>
    </reaction>
</comment>
<comment type="activity regulation">
    <text evidence="1">ATPase activity is stimulated by ViaA.</text>
</comment>
<comment type="subunit">
    <text evidence="1">Homohexamer. Interacts with ViaA.</text>
</comment>
<comment type="subcellular location">
    <subcellularLocation>
        <location evidence="1">Cytoplasm</location>
    </subcellularLocation>
</comment>
<comment type="similarity">
    <text evidence="1">Belongs to the RavA family.</text>
</comment>
<reference key="1">
    <citation type="journal article" date="2009" name="PLoS Genet.">
        <title>Organised genome dynamics in the Escherichia coli species results in highly diverse adaptive paths.</title>
        <authorList>
            <person name="Touchon M."/>
            <person name="Hoede C."/>
            <person name="Tenaillon O."/>
            <person name="Barbe V."/>
            <person name="Baeriswyl S."/>
            <person name="Bidet P."/>
            <person name="Bingen E."/>
            <person name="Bonacorsi S."/>
            <person name="Bouchier C."/>
            <person name="Bouvet O."/>
            <person name="Calteau A."/>
            <person name="Chiapello H."/>
            <person name="Clermont O."/>
            <person name="Cruveiller S."/>
            <person name="Danchin A."/>
            <person name="Diard M."/>
            <person name="Dossat C."/>
            <person name="Karoui M.E."/>
            <person name="Frapy E."/>
            <person name="Garry L."/>
            <person name="Ghigo J.M."/>
            <person name="Gilles A.M."/>
            <person name="Johnson J."/>
            <person name="Le Bouguenec C."/>
            <person name="Lescat M."/>
            <person name="Mangenot S."/>
            <person name="Martinez-Jehanne V."/>
            <person name="Matic I."/>
            <person name="Nassif X."/>
            <person name="Oztas S."/>
            <person name="Petit M.A."/>
            <person name="Pichon C."/>
            <person name="Rouy Z."/>
            <person name="Ruf C.S."/>
            <person name="Schneider D."/>
            <person name="Tourret J."/>
            <person name="Vacherie B."/>
            <person name="Vallenet D."/>
            <person name="Medigue C."/>
            <person name="Rocha E.P.C."/>
            <person name="Denamur E."/>
        </authorList>
    </citation>
    <scope>NUCLEOTIDE SEQUENCE [LARGE SCALE GENOMIC DNA]</scope>
    <source>
        <strain>S88 / ExPEC</strain>
    </source>
</reference>
<keyword id="KW-0067">ATP-binding</keyword>
<keyword id="KW-0143">Chaperone</keyword>
<keyword id="KW-0963">Cytoplasm</keyword>
<keyword id="KW-0378">Hydrolase</keyword>
<keyword id="KW-0547">Nucleotide-binding</keyword>
<keyword id="KW-1185">Reference proteome</keyword>
<accession>B7MGG6</accession>
<sequence length="498" mass="56351">MAHPHLLAERISRLSSSLEKGLYERSHAIRLCLLAALSGESVFLLGPPGIAKSLIARRLKFAFQNARAFEYLMTRFSTPEEVFGPLSIQALKDEGRYERLTSGYLPEAEIVFLDEIWKAGPAILNTLLTAINERQFRNGALVEKIPMRLLVAASNELPEADSSLEALYDRMLIRLWLDKVQDKANFRSMLTSQQDENDNPVPASLQITDEEYERWQKEIGEITLPDHVFELIFMLRQQLDKLPDAPYVSDRRWKKAIRLLQASAFFSGRSAVAPVDLILLKDCLWYDAQSLNLIQQQIDVLMTGHAWQQQGMLTRLGAIVQRHLQLQQQQSDKTALTVIRLGGIFSRRQQYQLPVNVTASTLTLLLQKPLKLHDMEVVHISFERSALEQWLSKGGEIRGKLNGIGFAQKLNLEVDSAQHLVVRDVSLQGSTLALPGSSAEGLPGEIKQQLEELESDWRKQHALFSEQQKCLFIPGDWLGRIEASLQDVGAQIRQAQQC</sequence>